<name>RS8_THESM</name>
<accession>C6A175</accession>
<feature type="chain" id="PRO_1000214274" description="Small ribosomal subunit protein uS8">
    <location>
        <begin position="1"/>
        <end position="130"/>
    </location>
</feature>
<keyword id="KW-1185">Reference proteome</keyword>
<keyword id="KW-0687">Ribonucleoprotein</keyword>
<keyword id="KW-0689">Ribosomal protein</keyword>
<keyword id="KW-0694">RNA-binding</keyword>
<keyword id="KW-0699">rRNA-binding</keyword>
<gene>
    <name evidence="1" type="primary">rps8</name>
    <name type="ordered locus">TSIB_0304</name>
</gene>
<reference key="1">
    <citation type="journal article" date="2009" name="Appl. Environ. Microbiol.">
        <title>Metabolic versatility and indigenous origin of the archaeon Thermococcus sibiricus, isolated from a siberian oil reservoir, as revealed by genome analysis.</title>
        <authorList>
            <person name="Mardanov A.V."/>
            <person name="Ravin N.V."/>
            <person name="Svetlitchnyi V.A."/>
            <person name="Beletsky A.V."/>
            <person name="Miroshnichenko M.L."/>
            <person name="Bonch-Osmolovskaya E.A."/>
            <person name="Skryabin K.G."/>
        </authorList>
    </citation>
    <scope>NUCLEOTIDE SEQUENCE [LARGE SCALE GENOMIC DNA]</scope>
    <source>
        <strain>DSM 12597 / MM 739</strain>
    </source>
</reference>
<sequence length="130" mass="14508">MTLLDPLANALSHITNSEKVGKSEVYIKPASKLIGEVLRVMQENGYIGEFEFIDDGRAGIYRVQLLGKVNKAGAIKPRFSVKAKEYEKWEKRFLPAFEFGILVVSTSQGVMTHKEALEKGIGGRLIAYVY</sequence>
<proteinExistence type="inferred from homology"/>
<comment type="function">
    <text evidence="1">One of the primary rRNA binding proteins, it binds directly to 16S rRNA central domain where it helps coordinate assembly of the platform of the 30S subunit.</text>
</comment>
<comment type="subunit">
    <text evidence="1">Part of the 30S ribosomal subunit.</text>
</comment>
<comment type="similarity">
    <text evidence="1">Belongs to the universal ribosomal protein uS8 family.</text>
</comment>
<organism>
    <name type="scientific">Thermococcus sibiricus (strain DSM 12597 / MM 739)</name>
    <dbReference type="NCBI Taxonomy" id="604354"/>
    <lineage>
        <taxon>Archaea</taxon>
        <taxon>Methanobacteriati</taxon>
        <taxon>Methanobacteriota</taxon>
        <taxon>Thermococci</taxon>
        <taxon>Thermococcales</taxon>
        <taxon>Thermococcaceae</taxon>
        <taxon>Thermococcus</taxon>
    </lineage>
</organism>
<protein>
    <recommendedName>
        <fullName evidence="1">Small ribosomal subunit protein uS8</fullName>
    </recommendedName>
    <alternativeName>
        <fullName evidence="2">30S ribosomal protein S8</fullName>
    </alternativeName>
</protein>
<evidence type="ECO:0000255" key="1">
    <source>
        <dbReference type="HAMAP-Rule" id="MF_01302"/>
    </source>
</evidence>
<evidence type="ECO:0000305" key="2"/>
<dbReference type="EMBL" id="CP001463">
    <property type="protein sequence ID" value="ACS89370.1"/>
    <property type="molecule type" value="Genomic_DNA"/>
</dbReference>
<dbReference type="RefSeq" id="WP_015848590.1">
    <property type="nucleotide sequence ID" value="NC_012883.1"/>
</dbReference>
<dbReference type="SMR" id="C6A175"/>
<dbReference type="STRING" id="604354.TSIB_0304"/>
<dbReference type="GeneID" id="8095277"/>
<dbReference type="KEGG" id="tsi:TSIB_0304"/>
<dbReference type="eggNOG" id="arCOG04091">
    <property type="taxonomic scope" value="Archaea"/>
</dbReference>
<dbReference type="HOGENOM" id="CLU_098428_1_1_2"/>
<dbReference type="OrthoDB" id="5670at2157"/>
<dbReference type="Proteomes" id="UP000009079">
    <property type="component" value="Chromosome"/>
</dbReference>
<dbReference type="GO" id="GO:1990904">
    <property type="term" value="C:ribonucleoprotein complex"/>
    <property type="evidence" value="ECO:0007669"/>
    <property type="project" value="UniProtKB-KW"/>
</dbReference>
<dbReference type="GO" id="GO:0005840">
    <property type="term" value="C:ribosome"/>
    <property type="evidence" value="ECO:0007669"/>
    <property type="project" value="UniProtKB-KW"/>
</dbReference>
<dbReference type="GO" id="GO:0019843">
    <property type="term" value="F:rRNA binding"/>
    <property type="evidence" value="ECO:0007669"/>
    <property type="project" value="UniProtKB-UniRule"/>
</dbReference>
<dbReference type="GO" id="GO:0003735">
    <property type="term" value="F:structural constituent of ribosome"/>
    <property type="evidence" value="ECO:0007669"/>
    <property type="project" value="InterPro"/>
</dbReference>
<dbReference type="GO" id="GO:0006412">
    <property type="term" value="P:translation"/>
    <property type="evidence" value="ECO:0007669"/>
    <property type="project" value="UniProtKB-UniRule"/>
</dbReference>
<dbReference type="FunFam" id="3.30.1370.30:FF:000001">
    <property type="entry name" value="40S ribosomal protein S15a"/>
    <property type="match status" value="1"/>
</dbReference>
<dbReference type="FunFam" id="3.30.1490.10:FF:000002">
    <property type="entry name" value="40S ribosomal protein S15a"/>
    <property type="match status" value="1"/>
</dbReference>
<dbReference type="Gene3D" id="3.30.1370.30">
    <property type="match status" value="1"/>
</dbReference>
<dbReference type="Gene3D" id="3.30.1490.10">
    <property type="match status" value="1"/>
</dbReference>
<dbReference type="HAMAP" id="MF_01302_A">
    <property type="entry name" value="Ribosomal_uS8_A"/>
    <property type="match status" value="1"/>
</dbReference>
<dbReference type="InterPro" id="IPR000630">
    <property type="entry name" value="Ribosomal_uS8"/>
</dbReference>
<dbReference type="InterPro" id="IPR047863">
    <property type="entry name" value="Ribosomal_uS8_CS"/>
</dbReference>
<dbReference type="InterPro" id="IPR035987">
    <property type="entry name" value="Ribosomal_uS8_sf"/>
</dbReference>
<dbReference type="NCBIfam" id="NF003115">
    <property type="entry name" value="PRK04034.1"/>
    <property type="match status" value="1"/>
</dbReference>
<dbReference type="PANTHER" id="PTHR11758">
    <property type="entry name" value="40S RIBOSOMAL PROTEIN S15A"/>
    <property type="match status" value="1"/>
</dbReference>
<dbReference type="Pfam" id="PF00410">
    <property type="entry name" value="Ribosomal_S8"/>
    <property type="match status" value="1"/>
</dbReference>
<dbReference type="SUPFAM" id="SSF56047">
    <property type="entry name" value="Ribosomal protein S8"/>
    <property type="match status" value="1"/>
</dbReference>
<dbReference type="PROSITE" id="PS00053">
    <property type="entry name" value="RIBOSOMAL_S8"/>
    <property type="match status" value="1"/>
</dbReference>